<feature type="chain" id="PRO_1000079206" description="Cysteine desulfurase IscS">
    <location>
        <begin position="1"/>
        <end position="404"/>
    </location>
</feature>
<feature type="active site" description="Cysteine persulfide intermediate" evidence="1">
    <location>
        <position position="328"/>
    </location>
</feature>
<feature type="binding site" evidence="1">
    <location>
        <begin position="75"/>
        <end position="76"/>
    </location>
    <ligand>
        <name>pyridoxal 5'-phosphate</name>
        <dbReference type="ChEBI" id="CHEBI:597326"/>
    </ligand>
</feature>
<feature type="binding site" evidence="1">
    <location>
        <position position="155"/>
    </location>
    <ligand>
        <name>pyridoxal 5'-phosphate</name>
        <dbReference type="ChEBI" id="CHEBI:597326"/>
    </ligand>
</feature>
<feature type="binding site" evidence="1">
    <location>
        <position position="183"/>
    </location>
    <ligand>
        <name>pyridoxal 5'-phosphate</name>
        <dbReference type="ChEBI" id="CHEBI:597326"/>
    </ligand>
</feature>
<feature type="binding site" evidence="1">
    <location>
        <begin position="203"/>
        <end position="205"/>
    </location>
    <ligand>
        <name>pyridoxal 5'-phosphate</name>
        <dbReference type="ChEBI" id="CHEBI:597326"/>
    </ligand>
</feature>
<feature type="binding site" evidence="1">
    <location>
        <position position="243"/>
    </location>
    <ligand>
        <name>pyridoxal 5'-phosphate</name>
        <dbReference type="ChEBI" id="CHEBI:597326"/>
    </ligand>
</feature>
<feature type="binding site" description="via persulfide group" evidence="1">
    <location>
        <position position="328"/>
    </location>
    <ligand>
        <name>[2Fe-2S] cluster</name>
        <dbReference type="ChEBI" id="CHEBI:190135"/>
        <note>ligand shared with IscU</note>
    </ligand>
</feature>
<feature type="modified residue" description="N6-(pyridoxal phosphate)lysine" evidence="1">
    <location>
        <position position="206"/>
    </location>
</feature>
<protein>
    <recommendedName>
        <fullName evidence="1">Cysteine desulfurase IscS</fullName>
        <ecNumber evidence="1">2.8.1.7</ecNumber>
    </recommendedName>
</protein>
<keyword id="KW-0001">2Fe-2S</keyword>
<keyword id="KW-0963">Cytoplasm</keyword>
<keyword id="KW-0408">Iron</keyword>
<keyword id="KW-0411">Iron-sulfur</keyword>
<keyword id="KW-0479">Metal-binding</keyword>
<keyword id="KW-0663">Pyridoxal phosphate</keyword>
<keyword id="KW-0808">Transferase</keyword>
<organism>
    <name type="scientific">Neisseria meningitidis serogroup C (strain 053442)</name>
    <dbReference type="NCBI Taxonomy" id="374833"/>
    <lineage>
        <taxon>Bacteria</taxon>
        <taxon>Pseudomonadati</taxon>
        <taxon>Pseudomonadota</taxon>
        <taxon>Betaproteobacteria</taxon>
        <taxon>Neisseriales</taxon>
        <taxon>Neisseriaceae</taxon>
        <taxon>Neisseria</taxon>
    </lineage>
</organism>
<comment type="function">
    <text evidence="1">Master enzyme that delivers sulfur to a number of partners involved in Fe-S cluster assembly, tRNA modification or cofactor biosynthesis. Catalyzes the removal of elemental sulfur atoms from cysteine to produce alanine. Functions as a sulfur delivery protein for Fe-S cluster synthesis onto IscU, an Fe-S scaffold assembly protein, as well as other S acceptor proteins.</text>
</comment>
<comment type="catalytic activity">
    <reaction evidence="1">
        <text>(sulfur carrier)-H + L-cysteine = (sulfur carrier)-SH + L-alanine</text>
        <dbReference type="Rhea" id="RHEA:43892"/>
        <dbReference type="Rhea" id="RHEA-COMP:14737"/>
        <dbReference type="Rhea" id="RHEA-COMP:14739"/>
        <dbReference type="ChEBI" id="CHEBI:29917"/>
        <dbReference type="ChEBI" id="CHEBI:35235"/>
        <dbReference type="ChEBI" id="CHEBI:57972"/>
        <dbReference type="ChEBI" id="CHEBI:64428"/>
        <dbReference type="EC" id="2.8.1.7"/>
    </reaction>
</comment>
<comment type="cofactor">
    <cofactor evidence="1">
        <name>pyridoxal 5'-phosphate</name>
        <dbReference type="ChEBI" id="CHEBI:597326"/>
    </cofactor>
</comment>
<comment type="pathway">
    <text evidence="1">Cofactor biosynthesis; iron-sulfur cluster biosynthesis.</text>
</comment>
<comment type="subunit">
    <text evidence="1">Homodimer. Forms a heterotetramer with IscU, interacts with other sulfur acceptors.</text>
</comment>
<comment type="subcellular location">
    <subcellularLocation>
        <location evidence="1">Cytoplasm</location>
    </subcellularLocation>
</comment>
<comment type="similarity">
    <text evidence="1">Belongs to the class-V pyridoxal-phosphate-dependent aminotransferase family. NifS/IscS subfamily.</text>
</comment>
<reference key="1">
    <citation type="journal article" date="2008" name="Genomics">
        <title>Characterization of ST-4821 complex, a unique Neisseria meningitidis clone.</title>
        <authorList>
            <person name="Peng J."/>
            <person name="Yang L."/>
            <person name="Yang F."/>
            <person name="Yang J."/>
            <person name="Yan Y."/>
            <person name="Nie H."/>
            <person name="Zhang X."/>
            <person name="Xiong Z."/>
            <person name="Jiang Y."/>
            <person name="Cheng F."/>
            <person name="Xu X."/>
            <person name="Chen S."/>
            <person name="Sun L."/>
            <person name="Li W."/>
            <person name="Shen Y."/>
            <person name="Shao Z."/>
            <person name="Liang X."/>
            <person name="Xu J."/>
            <person name="Jin Q."/>
        </authorList>
    </citation>
    <scope>NUCLEOTIDE SEQUENCE [LARGE SCALE GENOMIC DNA]</scope>
    <source>
        <strain>053442</strain>
    </source>
</reference>
<name>ISCS_NEIM0</name>
<evidence type="ECO:0000255" key="1">
    <source>
        <dbReference type="HAMAP-Rule" id="MF_00331"/>
    </source>
</evidence>
<accession>A9M029</accession>
<proteinExistence type="inferred from homology"/>
<sequence>MTVKTPVYLDYAATTPVDKRVAEKMIPYLTETFGNPASNSHAFGWEAEEAVEKARADIAALINADPKEIVFTSGATESDNLAIKGAANFYKTKGKHLITVKTEHKAVLDTMRELERQGFEVTYLGVQENGLIDLEELKAAIRDDTILISVMWVNNEIGVVQDIPAIGEICRERKIVFHVDAAQACGKVPVDVEAAKIDLLSMSAHKVYGPKGIGALYVRRKPRVRLEAQMHGGGHERGFRSGTLPTHQIVGMGEAFRIAKEELEQDMAHYRKLRDIFLKGIEGIEEVYVNGDLEHRAPNNLNVSFNFVEGESLIMAVKELAVSSGSACTSASLEPSYVLRALGRNDELAHSSLRITFGRMTTEEEVQFAAELIKSKIGKLRELSPLWEMFKDGIDLNSIEWAAH</sequence>
<gene>
    <name evidence="1" type="primary">iscS</name>
    <name type="ordered locus">NMCC_1293</name>
</gene>
<dbReference type="EC" id="2.8.1.7" evidence="1"/>
<dbReference type="EMBL" id="CP000381">
    <property type="protein sequence ID" value="ABX73465.1"/>
    <property type="molecule type" value="Genomic_DNA"/>
</dbReference>
<dbReference type="RefSeq" id="WP_012221779.1">
    <property type="nucleotide sequence ID" value="NC_010120.1"/>
</dbReference>
<dbReference type="SMR" id="A9M029"/>
<dbReference type="KEGG" id="nmn:NMCC_1293"/>
<dbReference type="HOGENOM" id="CLU_003433_0_2_4"/>
<dbReference type="UniPathway" id="UPA00266"/>
<dbReference type="Proteomes" id="UP000001177">
    <property type="component" value="Chromosome"/>
</dbReference>
<dbReference type="GO" id="GO:1990221">
    <property type="term" value="C:L-cysteine desulfurase complex"/>
    <property type="evidence" value="ECO:0007669"/>
    <property type="project" value="UniProtKB-ARBA"/>
</dbReference>
<dbReference type="GO" id="GO:0051537">
    <property type="term" value="F:2 iron, 2 sulfur cluster binding"/>
    <property type="evidence" value="ECO:0007669"/>
    <property type="project" value="UniProtKB-UniRule"/>
</dbReference>
<dbReference type="GO" id="GO:0031071">
    <property type="term" value="F:cysteine desulfurase activity"/>
    <property type="evidence" value="ECO:0007669"/>
    <property type="project" value="UniProtKB-UniRule"/>
</dbReference>
<dbReference type="GO" id="GO:0046872">
    <property type="term" value="F:metal ion binding"/>
    <property type="evidence" value="ECO:0007669"/>
    <property type="project" value="UniProtKB-KW"/>
</dbReference>
<dbReference type="GO" id="GO:0030170">
    <property type="term" value="F:pyridoxal phosphate binding"/>
    <property type="evidence" value="ECO:0007669"/>
    <property type="project" value="UniProtKB-UniRule"/>
</dbReference>
<dbReference type="GO" id="GO:0044571">
    <property type="term" value="P:[2Fe-2S] cluster assembly"/>
    <property type="evidence" value="ECO:0007669"/>
    <property type="project" value="UniProtKB-UniRule"/>
</dbReference>
<dbReference type="FunFam" id="3.40.640.10:FF:000003">
    <property type="entry name" value="Cysteine desulfurase IscS"/>
    <property type="match status" value="1"/>
</dbReference>
<dbReference type="FunFam" id="3.90.1150.10:FF:000002">
    <property type="entry name" value="Cysteine desulfurase IscS"/>
    <property type="match status" value="1"/>
</dbReference>
<dbReference type="Gene3D" id="3.90.1150.10">
    <property type="entry name" value="Aspartate Aminotransferase, domain 1"/>
    <property type="match status" value="1"/>
</dbReference>
<dbReference type="Gene3D" id="3.40.640.10">
    <property type="entry name" value="Type I PLP-dependent aspartate aminotransferase-like (Major domain)"/>
    <property type="match status" value="1"/>
</dbReference>
<dbReference type="HAMAP" id="MF_00331">
    <property type="entry name" value="Cys_desulf_IscS"/>
    <property type="match status" value="1"/>
</dbReference>
<dbReference type="InterPro" id="IPR000192">
    <property type="entry name" value="Aminotrans_V_dom"/>
</dbReference>
<dbReference type="InterPro" id="IPR020578">
    <property type="entry name" value="Aminotrans_V_PyrdxlP_BS"/>
</dbReference>
<dbReference type="InterPro" id="IPR010240">
    <property type="entry name" value="Cys_deSase_IscS"/>
</dbReference>
<dbReference type="InterPro" id="IPR016454">
    <property type="entry name" value="Cysteine_dSase"/>
</dbReference>
<dbReference type="InterPro" id="IPR015424">
    <property type="entry name" value="PyrdxlP-dep_Trfase"/>
</dbReference>
<dbReference type="InterPro" id="IPR015421">
    <property type="entry name" value="PyrdxlP-dep_Trfase_major"/>
</dbReference>
<dbReference type="InterPro" id="IPR015422">
    <property type="entry name" value="PyrdxlP-dep_Trfase_small"/>
</dbReference>
<dbReference type="NCBIfam" id="TIGR02006">
    <property type="entry name" value="IscS"/>
    <property type="match status" value="1"/>
</dbReference>
<dbReference type="NCBIfam" id="NF010611">
    <property type="entry name" value="PRK14012.1"/>
    <property type="match status" value="1"/>
</dbReference>
<dbReference type="PANTHER" id="PTHR11601:SF34">
    <property type="entry name" value="CYSTEINE DESULFURASE"/>
    <property type="match status" value="1"/>
</dbReference>
<dbReference type="PANTHER" id="PTHR11601">
    <property type="entry name" value="CYSTEINE DESULFURYLASE FAMILY MEMBER"/>
    <property type="match status" value="1"/>
</dbReference>
<dbReference type="Pfam" id="PF00266">
    <property type="entry name" value="Aminotran_5"/>
    <property type="match status" value="1"/>
</dbReference>
<dbReference type="PIRSF" id="PIRSF005572">
    <property type="entry name" value="NifS"/>
    <property type="match status" value="1"/>
</dbReference>
<dbReference type="SUPFAM" id="SSF53383">
    <property type="entry name" value="PLP-dependent transferases"/>
    <property type="match status" value="1"/>
</dbReference>
<dbReference type="PROSITE" id="PS00595">
    <property type="entry name" value="AA_TRANSFER_CLASS_5"/>
    <property type="match status" value="1"/>
</dbReference>